<evidence type="ECO:0000255" key="1">
    <source>
        <dbReference type="HAMAP-Rule" id="MF_01721"/>
    </source>
</evidence>
<feature type="chain" id="PRO_0000270477" description="Arabinose import ATP-binding protein AraG">
    <location>
        <begin position="1"/>
        <end position="508"/>
    </location>
</feature>
<feature type="domain" description="ABC transporter 1" evidence="1">
    <location>
        <begin position="5"/>
        <end position="240"/>
    </location>
</feature>
<feature type="domain" description="ABC transporter 2" evidence="1">
    <location>
        <begin position="250"/>
        <end position="496"/>
    </location>
</feature>
<feature type="binding site" evidence="1">
    <location>
        <begin position="37"/>
        <end position="44"/>
    </location>
    <ligand>
        <name>ATP</name>
        <dbReference type="ChEBI" id="CHEBI:30616"/>
    </ligand>
</feature>
<comment type="function">
    <text evidence="1">Part of the ABC transporter complex AraFGH involved in arabinose import. Responsible for energy coupling to the transport system.</text>
</comment>
<comment type="catalytic activity">
    <reaction evidence="1">
        <text>L-arabinose(out) + ATP + H2O = L-arabinose(in) + ADP + phosphate + H(+)</text>
        <dbReference type="Rhea" id="RHEA:30007"/>
        <dbReference type="ChEBI" id="CHEBI:15377"/>
        <dbReference type="ChEBI" id="CHEBI:15378"/>
        <dbReference type="ChEBI" id="CHEBI:17535"/>
        <dbReference type="ChEBI" id="CHEBI:30616"/>
        <dbReference type="ChEBI" id="CHEBI:43474"/>
        <dbReference type="ChEBI" id="CHEBI:456216"/>
        <dbReference type="EC" id="7.5.2.12"/>
    </reaction>
</comment>
<comment type="subunit">
    <text evidence="1">The complex is composed of two ATP-binding proteins (AraG), two transmembrane proteins (AraH) and a solute-binding protein (AraF).</text>
</comment>
<comment type="subcellular location">
    <subcellularLocation>
        <location evidence="1">Cell inner membrane</location>
        <topology evidence="1">Peripheral membrane protein</topology>
    </subcellularLocation>
</comment>
<comment type="similarity">
    <text evidence="1">Belongs to the ABC transporter superfamily. Arabinose importer (TC 3.A.1.2.2) family.</text>
</comment>
<gene>
    <name evidence="1" type="primary">araG</name>
    <name type="ordered locus">RB0489</name>
    <name type="ORF">SMb20507</name>
</gene>
<proteinExistence type="inferred from homology"/>
<keyword id="KW-0067">ATP-binding</keyword>
<keyword id="KW-0997">Cell inner membrane</keyword>
<keyword id="KW-1003">Cell membrane</keyword>
<keyword id="KW-0472">Membrane</keyword>
<keyword id="KW-0547">Nucleotide-binding</keyword>
<keyword id="KW-0614">Plasmid</keyword>
<keyword id="KW-1185">Reference proteome</keyword>
<keyword id="KW-0677">Repeat</keyword>
<keyword id="KW-0762">Sugar transport</keyword>
<keyword id="KW-1278">Translocase</keyword>
<keyword id="KW-0813">Transport</keyword>
<protein>
    <recommendedName>
        <fullName evidence="1">Arabinose import ATP-binding protein AraG</fullName>
        <ecNumber evidence="1">7.5.2.12</ecNumber>
    </recommendedName>
</protein>
<reference key="1">
    <citation type="journal article" date="2001" name="Proc. Natl. Acad. Sci. U.S.A.">
        <title>The complete sequence of the 1,683-kb pSymB megaplasmid from the N2-fixing endosymbiont Sinorhizobium meliloti.</title>
        <authorList>
            <person name="Finan T.M."/>
            <person name="Weidner S."/>
            <person name="Wong K."/>
            <person name="Buhrmester J."/>
            <person name="Chain P."/>
            <person name="Vorhoelter F.J."/>
            <person name="Hernandez-Lucas I."/>
            <person name="Becker A."/>
            <person name="Cowie A."/>
            <person name="Gouzy J."/>
            <person name="Golding B."/>
            <person name="Puehler A."/>
        </authorList>
    </citation>
    <scope>NUCLEOTIDE SEQUENCE [LARGE SCALE GENOMIC DNA]</scope>
    <source>
        <strain>1021</strain>
    </source>
</reference>
<reference key="2">
    <citation type="journal article" date="2001" name="Science">
        <title>The composite genome of the legume symbiont Sinorhizobium meliloti.</title>
        <authorList>
            <person name="Galibert F."/>
            <person name="Finan T.M."/>
            <person name="Long S.R."/>
            <person name="Puehler A."/>
            <person name="Abola P."/>
            <person name="Ampe F."/>
            <person name="Barloy-Hubler F."/>
            <person name="Barnett M.J."/>
            <person name="Becker A."/>
            <person name="Boistard P."/>
            <person name="Bothe G."/>
            <person name="Boutry M."/>
            <person name="Bowser L."/>
            <person name="Buhrmester J."/>
            <person name="Cadieu E."/>
            <person name="Capela D."/>
            <person name="Chain P."/>
            <person name="Cowie A."/>
            <person name="Davis R.W."/>
            <person name="Dreano S."/>
            <person name="Federspiel N.A."/>
            <person name="Fisher R.F."/>
            <person name="Gloux S."/>
            <person name="Godrie T."/>
            <person name="Goffeau A."/>
            <person name="Golding B."/>
            <person name="Gouzy J."/>
            <person name="Gurjal M."/>
            <person name="Hernandez-Lucas I."/>
            <person name="Hong A."/>
            <person name="Huizar L."/>
            <person name="Hyman R.W."/>
            <person name="Jones T."/>
            <person name="Kahn D."/>
            <person name="Kahn M.L."/>
            <person name="Kalman S."/>
            <person name="Keating D.H."/>
            <person name="Kiss E."/>
            <person name="Komp C."/>
            <person name="Lelaure V."/>
            <person name="Masuy D."/>
            <person name="Palm C."/>
            <person name="Peck M.C."/>
            <person name="Pohl T.M."/>
            <person name="Portetelle D."/>
            <person name="Purnelle B."/>
            <person name="Ramsperger U."/>
            <person name="Surzycki R."/>
            <person name="Thebault P."/>
            <person name="Vandenbol M."/>
            <person name="Vorhoelter F.J."/>
            <person name="Weidner S."/>
            <person name="Wells D.H."/>
            <person name="Wong K."/>
            <person name="Yeh K.-C."/>
            <person name="Batut J."/>
        </authorList>
    </citation>
    <scope>NUCLEOTIDE SEQUENCE [LARGE SCALE GENOMIC DNA]</scope>
    <source>
        <strain>1021</strain>
    </source>
</reference>
<geneLocation type="plasmid">
    <name>pSymB</name>
    <name>megaplasmid 2</name>
</geneLocation>
<accession>Q92W56</accession>
<sequence length="508" mass="55515">MQDFLEFQSISKGYPGVQALSEVSFSVRKGAVHGLMGENGAGKSTLIRVLSGDQAADTGEIRINGEPQHYRSVRDAFNAGVIVIHQELQLVPELTVAENLWLGRFPGKAGVIDRRQLIRVVSDRLAEIGIDVDPEAKVASLSIGERQMVEIAKAVMTDARVIALDEPTSSLSSRESEILFALIDRLRSNGTVILYVSHRLDEIFRLCNSLTVLRDGRLAAHHPDISKVGREQIIAEMVGREISNIWGWRARTLGAARLTVERVSGANLPQPISFTVRAGEILGFFGLIGAGRSEMARLVYGADRRRQGKVLVDGLAVPADSPRLSIRAGVVLCPEDRKFDGIVQGRSIEENMAISSRRHFSPFGVVDKGKEAELAERFIAKLRVRTPSRHQDIVNLSGGNQQKVILGRWLSEEGVKVLLIDEPTRGIDVGAKSEIYEILYELAAQGMAIVVISSELPEVMGIADRILVMCEGRIAAEIDRSDFDEHRILAAALPDASATTATLPEQVS</sequence>
<name>ARAG_RHIME</name>
<dbReference type="EC" id="7.5.2.12" evidence="1"/>
<dbReference type="EMBL" id="AL591985">
    <property type="protein sequence ID" value="CAC48889.1"/>
    <property type="molecule type" value="Genomic_DNA"/>
</dbReference>
<dbReference type="PIR" id="A95903">
    <property type="entry name" value="A95903"/>
</dbReference>
<dbReference type="RefSeq" id="NP_437029.1">
    <property type="nucleotide sequence ID" value="NC_003078.1"/>
</dbReference>
<dbReference type="RefSeq" id="WP_010975368.1">
    <property type="nucleotide sequence ID" value="NC_003078.1"/>
</dbReference>
<dbReference type="SMR" id="Q92W56"/>
<dbReference type="DNASU" id="1236820"/>
<dbReference type="EnsemblBacteria" id="CAC48889">
    <property type="protein sequence ID" value="CAC48889"/>
    <property type="gene ID" value="SM_b20507"/>
</dbReference>
<dbReference type="KEGG" id="sme:SM_b20507"/>
<dbReference type="PATRIC" id="fig|266834.11.peg.5421"/>
<dbReference type="eggNOG" id="COG1129">
    <property type="taxonomic scope" value="Bacteria"/>
</dbReference>
<dbReference type="HOGENOM" id="CLU_000604_92_3_5"/>
<dbReference type="OrthoDB" id="9805029at2"/>
<dbReference type="Proteomes" id="UP000001976">
    <property type="component" value="Plasmid pSymB"/>
</dbReference>
<dbReference type="GO" id="GO:0005886">
    <property type="term" value="C:plasma membrane"/>
    <property type="evidence" value="ECO:0007669"/>
    <property type="project" value="UniProtKB-SubCell"/>
</dbReference>
<dbReference type="GO" id="GO:0015612">
    <property type="term" value="F:ABC-type L-arabinose transporter activity"/>
    <property type="evidence" value="ECO:0007669"/>
    <property type="project" value="UniProtKB-EC"/>
</dbReference>
<dbReference type="GO" id="GO:0005524">
    <property type="term" value="F:ATP binding"/>
    <property type="evidence" value="ECO:0007669"/>
    <property type="project" value="UniProtKB-KW"/>
</dbReference>
<dbReference type="GO" id="GO:0016887">
    <property type="term" value="F:ATP hydrolysis activity"/>
    <property type="evidence" value="ECO:0007669"/>
    <property type="project" value="InterPro"/>
</dbReference>
<dbReference type="CDD" id="cd03216">
    <property type="entry name" value="ABC_Carb_Monos_I"/>
    <property type="match status" value="1"/>
</dbReference>
<dbReference type="CDD" id="cd03215">
    <property type="entry name" value="ABC_Carb_Monos_II"/>
    <property type="match status" value="1"/>
</dbReference>
<dbReference type="FunFam" id="3.40.50.300:FF:000127">
    <property type="entry name" value="Ribose import ATP-binding protein RbsA"/>
    <property type="match status" value="1"/>
</dbReference>
<dbReference type="Gene3D" id="3.40.50.300">
    <property type="entry name" value="P-loop containing nucleotide triphosphate hydrolases"/>
    <property type="match status" value="2"/>
</dbReference>
<dbReference type="InterPro" id="IPR003593">
    <property type="entry name" value="AAA+_ATPase"/>
</dbReference>
<dbReference type="InterPro" id="IPR050107">
    <property type="entry name" value="ABC_carbohydrate_import_ATPase"/>
</dbReference>
<dbReference type="InterPro" id="IPR003439">
    <property type="entry name" value="ABC_transporter-like_ATP-bd"/>
</dbReference>
<dbReference type="InterPro" id="IPR017871">
    <property type="entry name" value="ABC_transporter-like_CS"/>
</dbReference>
<dbReference type="InterPro" id="IPR027417">
    <property type="entry name" value="P-loop_NTPase"/>
</dbReference>
<dbReference type="NCBIfam" id="NF008442">
    <property type="entry name" value="PRK11288.1"/>
    <property type="match status" value="1"/>
</dbReference>
<dbReference type="PANTHER" id="PTHR43790:SF6">
    <property type="entry name" value="ARABINOSE IMPORT ATP-BINDING PROTEIN ARAG"/>
    <property type="match status" value="1"/>
</dbReference>
<dbReference type="PANTHER" id="PTHR43790">
    <property type="entry name" value="CARBOHYDRATE TRANSPORT ATP-BINDING PROTEIN MG119-RELATED"/>
    <property type="match status" value="1"/>
</dbReference>
<dbReference type="Pfam" id="PF00005">
    <property type="entry name" value="ABC_tran"/>
    <property type="match status" value="2"/>
</dbReference>
<dbReference type="SMART" id="SM00382">
    <property type="entry name" value="AAA"/>
    <property type="match status" value="2"/>
</dbReference>
<dbReference type="SUPFAM" id="SSF52540">
    <property type="entry name" value="P-loop containing nucleoside triphosphate hydrolases"/>
    <property type="match status" value="2"/>
</dbReference>
<dbReference type="PROSITE" id="PS00211">
    <property type="entry name" value="ABC_TRANSPORTER_1"/>
    <property type="match status" value="1"/>
</dbReference>
<dbReference type="PROSITE" id="PS50893">
    <property type="entry name" value="ABC_TRANSPORTER_2"/>
    <property type="match status" value="2"/>
</dbReference>
<dbReference type="PROSITE" id="PS51268">
    <property type="entry name" value="ARAG"/>
    <property type="match status" value="1"/>
</dbReference>
<organism>
    <name type="scientific">Rhizobium meliloti (strain 1021)</name>
    <name type="common">Ensifer meliloti</name>
    <name type="synonym">Sinorhizobium meliloti</name>
    <dbReference type="NCBI Taxonomy" id="266834"/>
    <lineage>
        <taxon>Bacteria</taxon>
        <taxon>Pseudomonadati</taxon>
        <taxon>Pseudomonadota</taxon>
        <taxon>Alphaproteobacteria</taxon>
        <taxon>Hyphomicrobiales</taxon>
        <taxon>Rhizobiaceae</taxon>
        <taxon>Sinorhizobium/Ensifer group</taxon>
        <taxon>Sinorhizobium</taxon>
    </lineage>
</organism>